<gene>
    <name type="ORF">FGRAMPH1_01T20223</name>
    <name type="ORF">FGRRES_06404_M</name>
    <name type="ORF">FGSG_06404</name>
</gene>
<comment type="function">
    <text evidence="2">Hydrolyzes fatty acids from S-acylated cysteine residues in proteins with a strong preference for palmitoylated G-alpha proteins over other acyl substrates. Mediates the deacylation of G-alpha proteins such as GPA1 in vivo, but has weak or no activity toward palmitoylated Ras proteins. Has weak lysophospholipase activity in vitro; however such activity may not exist in vivo.</text>
</comment>
<comment type="catalytic activity">
    <reaction evidence="2">
        <text>S-hexadecanoyl-L-cysteinyl-[protein] + H2O = L-cysteinyl-[protein] + hexadecanoate + H(+)</text>
        <dbReference type="Rhea" id="RHEA:19233"/>
        <dbReference type="Rhea" id="RHEA-COMP:10131"/>
        <dbReference type="Rhea" id="RHEA-COMP:11032"/>
        <dbReference type="ChEBI" id="CHEBI:7896"/>
        <dbReference type="ChEBI" id="CHEBI:15377"/>
        <dbReference type="ChEBI" id="CHEBI:15378"/>
        <dbReference type="ChEBI" id="CHEBI:29950"/>
        <dbReference type="ChEBI" id="CHEBI:74151"/>
        <dbReference type="EC" id="3.1.2.22"/>
    </reaction>
</comment>
<comment type="subcellular location">
    <subcellularLocation>
        <location evidence="2">Cytoplasm</location>
    </subcellularLocation>
    <subcellularLocation>
        <location evidence="2">Nucleus</location>
    </subcellularLocation>
</comment>
<comment type="similarity">
    <text evidence="3">Belongs to the AB hydrolase superfamily. AB hydrolase 2 family.</text>
</comment>
<comment type="sequence caution" evidence="3">
    <conflict type="erroneous initiation">
        <sequence resource="EMBL-CDS" id="CEF86022"/>
    </conflict>
    <text>Extended N-terminus.</text>
</comment>
<evidence type="ECO:0000250" key="1"/>
<evidence type="ECO:0000250" key="2">
    <source>
        <dbReference type="UniProtKB" id="Q12354"/>
    </source>
</evidence>
<evidence type="ECO:0000305" key="3"/>
<proteinExistence type="inferred from homology"/>
<sequence>MSSGRIAPLVFPAASQHTATVIFVHGLGDTGHGWASAVENWRRRQKMDEVKFILPHAPQIPISVNMGMRMPGWFDIKQLGGDVDSLIRNEDTEGIKLSQKYFHNLIQQEIDSGIVPERIVLGGFSQGGAMSLLAGLTCTSKLGGILGLSSWLLLSKTFADMVKPTDANRQTPVMMFHGEEDPIVPCERGKLSAELLKGLGYDVAWKTYPGMGHSAVPEELDEVEAFLRKQLPPKN</sequence>
<dbReference type="EC" id="3.1.2.-" evidence="2"/>
<dbReference type="EC" id="3.1.2.22" evidence="2"/>
<dbReference type="EMBL" id="DS231665">
    <property type="protein sequence ID" value="ESU12492.1"/>
    <property type="molecule type" value="Genomic_DNA"/>
</dbReference>
<dbReference type="EMBL" id="HG970334">
    <property type="protein sequence ID" value="CEF86022.1"/>
    <property type="status" value="ALT_INIT"/>
    <property type="molecule type" value="Genomic_DNA"/>
</dbReference>
<dbReference type="RefSeq" id="XP_011325068.1">
    <property type="nucleotide sequence ID" value="XM_011326766.1"/>
</dbReference>
<dbReference type="SMR" id="Q4I8Q4"/>
<dbReference type="FunCoup" id="Q4I8Q4">
    <property type="interactions" value="500"/>
</dbReference>
<dbReference type="STRING" id="229533.Q4I8Q4"/>
<dbReference type="ESTHER" id="gibze-apth1">
    <property type="family name" value="LYsophospholipase_carboxylesterase"/>
</dbReference>
<dbReference type="GeneID" id="23553537"/>
<dbReference type="KEGG" id="fgr:FGSG_06404"/>
<dbReference type="eggNOG" id="KOG2112">
    <property type="taxonomic scope" value="Eukaryota"/>
</dbReference>
<dbReference type="HOGENOM" id="CLU_049413_3_8_1"/>
<dbReference type="InParanoid" id="Q4I8Q4"/>
<dbReference type="OrthoDB" id="69528at110618"/>
<dbReference type="Proteomes" id="UP000070720">
    <property type="component" value="Chromosome 3"/>
</dbReference>
<dbReference type="GO" id="GO:0005737">
    <property type="term" value="C:cytoplasm"/>
    <property type="evidence" value="ECO:0007669"/>
    <property type="project" value="UniProtKB-SubCell"/>
</dbReference>
<dbReference type="GO" id="GO:0005634">
    <property type="term" value="C:nucleus"/>
    <property type="evidence" value="ECO:0007669"/>
    <property type="project" value="UniProtKB-SubCell"/>
</dbReference>
<dbReference type="GO" id="GO:0052689">
    <property type="term" value="F:carboxylic ester hydrolase activity"/>
    <property type="evidence" value="ECO:0007669"/>
    <property type="project" value="UniProtKB-KW"/>
</dbReference>
<dbReference type="GO" id="GO:0008474">
    <property type="term" value="F:palmitoyl-(protein) hydrolase activity"/>
    <property type="evidence" value="ECO:0007669"/>
    <property type="project" value="TreeGrafter"/>
</dbReference>
<dbReference type="GO" id="GO:0006631">
    <property type="term" value="P:fatty acid metabolic process"/>
    <property type="evidence" value="ECO:0007669"/>
    <property type="project" value="UniProtKB-KW"/>
</dbReference>
<dbReference type="FunFam" id="3.40.50.1820:FF:000010">
    <property type="entry name" value="Acyl-protein thioesterase 2"/>
    <property type="match status" value="1"/>
</dbReference>
<dbReference type="Gene3D" id="3.40.50.1820">
    <property type="entry name" value="alpha/beta hydrolase"/>
    <property type="match status" value="1"/>
</dbReference>
<dbReference type="InterPro" id="IPR029058">
    <property type="entry name" value="AB_hydrolase_fold"/>
</dbReference>
<dbReference type="InterPro" id="IPR050565">
    <property type="entry name" value="LYPA1-2/EST-like"/>
</dbReference>
<dbReference type="InterPro" id="IPR003140">
    <property type="entry name" value="PLipase/COase/thioEstase"/>
</dbReference>
<dbReference type="PANTHER" id="PTHR10655:SF17">
    <property type="entry name" value="LYSOPHOSPHOLIPASE-LIKE PROTEIN 1"/>
    <property type="match status" value="1"/>
</dbReference>
<dbReference type="PANTHER" id="PTHR10655">
    <property type="entry name" value="LYSOPHOSPHOLIPASE-RELATED"/>
    <property type="match status" value="1"/>
</dbReference>
<dbReference type="Pfam" id="PF02230">
    <property type="entry name" value="Abhydrolase_2"/>
    <property type="match status" value="1"/>
</dbReference>
<dbReference type="SUPFAM" id="SSF53474">
    <property type="entry name" value="alpha/beta-Hydrolases"/>
    <property type="match status" value="1"/>
</dbReference>
<feature type="chain" id="PRO_0000229010" description="Acyl-protein thioesterase 1">
    <location>
        <begin position="1"/>
        <end position="235"/>
    </location>
</feature>
<feature type="active site" description="Charge relay system" evidence="1">
    <location>
        <position position="125"/>
    </location>
</feature>
<feature type="active site" description="Charge relay system" evidence="1">
    <location>
        <position position="181"/>
    </location>
</feature>
<feature type="active site" description="Charge relay system" evidence="1">
    <location>
        <position position="213"/>
    </location>
</feature>
<name>APTH1_GIBZE</name>
<protein>
    <recommendedName>
        <fullName>Acyl-protein thioesterase 1</fullName>
        <ecNumber evidence="2">3.1.2.-</ecNumber>
    </recommendedName>
    <alternativeName>
        <fullName>Palmitoyl-protein hydrolase</fullName>
        <ecNumber evidence="2">3.1.2.22</ecNumber>
    </alternativeName>
</protein>
<reference key="1">
    <citation type="journal article" date="2007" name="Science">
        <title>The Fusarium graminearum genome reveals a link between localized polymorphism and pathogen specialization.</title>
        <authorList>
            <person name="Cuomo C.A."/>
            <person name="Gueldener U."/>
            <person name="Xu J.-R."/>
            <person name="Trail F."/>
            <person name="Turgeon B.G."/>
            <person name="Di Pietro A."/>
            <person name="Walton J.D."/>
            <person name="Ma L.-J."/>
            <person name="Baker S.E."/>
            <person name="Rep M."/>
            <person name="Adam G."/>
            <person name="Antoniw J."/>
            <person name="Baldwin T."/>
            <person name="Calvo S.E."/>
            <person name="Chang Y.-L."/>
            <person name="DeCaprio D."/>
            <person name="Gale L.R."/>
            <person name="Gnerre S."/>
            <person name="Goswami R.S."/>
            <person name="Hammond-Kosack K."/>
            <person name="Harris L.J."/>
            <person name="Hilburn K."/>
            <person name="Kennell J.C."/>
            <person name="Kroken S."/>
            <person name="Magnuson J.K."/>
            <person name="Mannhaupt G."/>
            <person name="Mauceli E.W."/>
            <person name="Mewes H.-W."/>
            <person name="Mitterbauer R."/>
            <person name="Muehlbauer G."/>
            <person name="Muensterkoetter M."/>
            <person name="Nelson D."/>
            <person name="O'Donnell K."/>
            <person name="Ouellet T."/>
            <person name="Qi W."/>
            <person name="Quesneville H."/>
            <person name="Roncero M.I.G."/>
            <person name="Seong K.-Y."/>
            <person name="Tetko I.V."/>
            <person name="Urban M."/>
            <person name="Waalwijk C."/>
            <person name="Ward T.J."/>
            <person name="Yao J."/>
            <person name="Birren B.W."/>
            <person name="Kistler H.C."/>
        </authorList>
    </citation>
    <scope>NUCLEOTIDE SEQUENCE [LARGE SCALE GENOMIC DNA]</scope>
    <source>
        <strain>ATCC MYA-4620 / CBS 123657 / FGSC 9075 / NRRL 31084 / PH-1</strain>
    </source>
</reference>
<reference key="2">
    <citation type="journal article" date="2010" name="Nature">
        <title>Comparative genomics reveals mobile pathogenicity chromosomes in Fusarium.</title>
        <authorList>
            <person name="Ma L.-J."/>
            <person name="van der Does H.C."/>
            <person name="Borkovich K.A."/>
            <person name="Coleman J.J."/>
            <person name="Daboussi M.-J."/>
            <person name="Di Pietro A."/>
            <person name="Dufresne M."/>
            <person name="Freitag M."/>
            <person name="Grabherr M."/>
            <person name="Henrissat B."/>
            <person name="Houterman P.M."/>
            <person name="Kang S."/>
            <person name="Shim W.-B."/>
            <person name="Woloshuk C."/>
            <person name="Xie X."/>
            <person name="Xu J.-R."/>
            <person name="Antoniw J."/>
            <person name="Baker S.E."/>
            <person name="Bluhm B.H."/>
            <person name="Breakspear A."/>
            <person name="Brown D.W."/>
            <person name="Butchko R.A.E."/>
            <person name="Chapman S."/>
            <person name="Coulson R."/>
            <person name="Coutinho P.M."/>
            <person name="Danchin E.G.J."/>
            <person name="Diener A."/>
            <person name="Gale L.R."/>
            <person name="Gardiner D.M."/>
            <person name="Goff S."/>
            <person name="Hammond-Kosack K.E."/>
            <person name="Hilburn K."/>
            <person name="Hua-Van A."/>
            <person name="Jonkers W."/>
            <person name="Kazan K."/>
            <person name="Kodira C.D."/>
            <person name="Koehrsen M."/>
            <person name="Kumar L."/>
            <person name="Lee Y.-H."/>
            <person name="Li L."/>
            <person name="Manners J.M."/>
            <person name="Miranda-Saavedra D."/>
            <person name="Mukherjee M."/>
            <person name="Park G."/>
            <person name="Park J."/>
            <person name="Park S.-Y."/>
            <person name="Proctor R.H."/>
            <person name="Regev A."/>
            <person name="Ruiz-Roldan M.C."/>
            <person name="Sain D."/>
            <person name="Sakthikumar S."/>
            <person name="Sykes S."/>
            <person name="Schwartz D.C."/>
            <person name="Turgeon B.G."/>
            <person name="Wapinski I."/>
            <person name="Yoder O."/>
            <person name="Young S."/>
            <person name="Zeng Q."/>
            <person name="Zhou S."/>
            <person name="Galagan J."/>
            <person name="Cuomo C.A."/>
            <person name="Kistler H.C."/>
            <person name="Rep M."/>
        </authorList>
    </citation>
    <scope>GENOME REANNOTATION</scope>
    <source>
        <strain>ATCC MYA-4620 / CBS 123657 / FGSC 9075 / NRRL 31084 / PH-1</strain>
    </source>
</reference>
<reference key="3">
    <citation type="journal article" date="2015" name="BMC Genomics">
        <title>The completed genome sequence of the pathogenic ascomycete fungus Fusarium graminearum.</title>
        <authorList>
            <person name="King R."/>
            <person name="Urban M."/>
            <person name="Hammond-Kosack M.C.U."/>
            <person name="Hassani-Pak K."/>
            <person name="Hammond-Kosack K.E."/>
        </authorList>
    </citation>
    <scope>NUCLEOTIDE SEQUENCE [LARGE SCALE GENOMIC DNA]</scope>
    <source>
        <strain>ATCC MYA-4620 / CBS 123657 / FGSC 9075 / NRRL 31084 / PH-1</strain>
    </source>
</reference>
<accession>Q4I8Q4</accession>
<accession>A0A098DXG9</accession>
<accession>A0A0E0SHV9</accession>
<accession>A0A1I9FRY6</accession>
<accession>V6RET4</accession>
<keyword id="KW-0963">Cytoplasm</keyword>
<keyword id="KW-0276">Fatty acid metabolism</keyword>
<keyword id="KW-0378">Hydrolase</keyword>
<keyword id="KW-0443">Lipid metabolism</keyword>
<keyword id="KW-0539">Nucleus</keyword>
<keyword id="KW-1185">Reference proteome</keyword>
<keyword id="KW-0719">Serine esterase</keyword>
<organism>
    <name type="scientific">Gibberella zeae (strain ATCC MYA-4620 / CBS 123657 / FGSC 9075 / NRRL 31084 / PH-1)</name>
    <name type="common">Wheat head blight fungus</name>
    <name type="synonym">Fusarium graminearum</name>
    <dbReference type="NCBI Taxonomy" id="229533"/>
    <lineage>
        <taxon>Eukaryota</taxon>
        <taxon>Fungi</taxon>
        <taxon>Dikarya</taxon>
        <taxon>Ascomycota</taxon>
        <taxon>Pezizomycotina</taxon>
        <taxon>Sordariomycetes</taxon>
        <taxon>Hypocreomycetidae</taxon>
        <taxon>Hypocreales</taxon>
        <taxon>Nectriaceae</taxon>
        <taxon>Fusarium</taxon>
    </lineage>
</organism>